<dbReference type="EC" id="2.7.7.38" evidence="1"/>
<dbReference type="EMBL" id="CP000890">
    <property type="protein sequence ID" value="ABX77804.1"/>
    <property type="molecule type" value="Genomic_DNA"/>
</dbReference>
<dbReference type="SMR" id="A9NBW9"/>
<dbReference type="KEGG" id="cbs:COXBURSA331_A0589"/>
<dbReference type="HOGENOM" id="CLU_065038_1_0_6"/>
<dbReference type="UniPathway" id="UPA00030"/>
<dbReference type="UniPathway" id="UPA00358">
    <property type="reaction ID" value="UER00476"/>
</dbReference>
<dbReference type="GO" id="GO:0005829">
    <property type="term" value="C:cytosol"/>
    <property type="evidence" value="ECO:0007669"/>
    <property type="project" value="TreeGrafter"/>
</dbReference>
<dbReference type="GO" id="GO:0008690">
    <property type="term" value="F:3-deoxy-manno-octulosonate cytidylyltransferase activity"/>
    <property type="evidence" value="ECO:0007669"/>
    <property type="project" value="UniProtKB-UniRule"/>
</dbReference>
<dbReference type="GO" id="GO:0033468">
    <property type="term" value="P:CMP-keto-3-deoxy-D-manno-octulosonic acid biosynthetic process"/>
    <property type="evidence" value="ECO:0007669"/>
    <property type="project" value="UniProtKB-UniRule"/>
</dbReference>
<dbReference type="GO" id="GO:0009103">
    <property type="term" value="P:lipopolysaccharide biosynthetic process"/>
    <property type="evidence" value="ECO:0007669"/>
    <property type="project" value="UniProtKB-UniRule"/>
</dbReference>
<dbReference type="CDD" id="cd02517">
    <property type="entry name" value="CMP-KDO-Synthetase"/>
    <property type="match status" value="1"/>
</dbReference>
<dbReference type="FunFam" id="3.90.550.10:FF:000011">
    <property type="entry name" value="3-deoxy-manno-octulosonate cytidylyltransferase"/>
    <property type="match status" value="1"/>
</dbReference>
<dbReference type="Gene3D" id="3.90.550.10">
    <property type="entry name" value="Spore Coat Polysaccharide Biosynthesis Protein SpsA, Chain A"/>
    <property type="match status" value="1"/>
</dbReference>
<dbReference type="HAMAP" id="MF_00057">
    <property type="entry name" value="KdsB"/>
    <property type="match status" value="1"/>
</dbReference>
<dbReference type="InterPro" id="IPR003329">
    <property type="entry name" value="Cytidylyl_trans"/>
</dbReference>
<dbReference type="InterPro" id="IPR004528">
    <property type="entry name" value="KdsB"/>
</dbReference>
<dbReference type="InterPro" id="IPR029044">
    <property type="entry name" value="Nucleotide-diphossugar_trans"/>
</dbReference>
<dbReference type="NCBIfam" id="TIGR00466">
    <property type="entry name" value="kdsB"/>
    <property type="match status" value="1"/>
</dbReference>
<dbReference type="NCBIfam" id="NF003950">
    <property type="entry name" value="PRK05450.1-3"/>
    <property type="match status" value="1"/>
</dbReference>
<dbReference type="NCBIfam" id="NF003952">
    <property type="entry name" value="PRK05450.1-5"/>
    <property type="match status" value="1"/>
</dbReference>
<dbReference type="NCBIfam" id="NF009905">
    <property type="entry name" value="PRK13368.1"/>
    <property type="match status" value="1"/>
</dbReference>
<dbReference type="PANTHER" id="PTHR42866">
    <property type="entry name" value="3-DEOXY-MANNO-OCTULOSONATE CYTIDYLYLTRANSFERASE"/>
    <property type="match status" value="1"/>
</dbReference>
<dbReference type="PANTHER" id="PTHR42866:SF2">
    <property type="entry name" value="3-DEOXY-MANNO-OCTULOSONATE CYTIDYLYLTRANSFERASE, MITOCHONDRIAL"/>
    <property type="match status" value="1"/>
</dbReference>
<dbReference type="Pfam" id="PF02348">
    <property type="entry name" value="CTP_transf_3"/>
    <property type="match status" value="1"/>
</dbReference>
<dbReference type="SUPFAM" id="SSF53448">
    <property type="entry name" value="Nucleotide-diphospho-sugar transferases"/>
    <property type="match status" value="1"/>
</dbReference>
<protein>
    <recommendedName>
        <fullName evidence="1">3-deoxy-manno-octulosonate cytidylyltransferase</fullName>
        <ecNumber evidence="1">2.7.7.38</ecNumber>
    </recommendedName>
    <alternativeName>
        <fullName evidence="1">CMP-2-keto-3-deoxyoctulosonic acid synthase</fullName>
        <shortName evidence="1">CKS</shortName>
        <shortName evidence="1">CMP-KDO synthase</shortName>
    </alternativeName>
</protein>
<evidence type="ECO:0000255" key="1">
    <source>
        <dbReference type="HAMAP-Rule" id="MF_00057"/>
    </source>
</evidence>
<organism>
    <name type="scientific">Coxiella burnetii (strain RSA 331 / Henzerling II)</name>
    <dbReference type="NCBI Taxonomy" id="360115"/>
    <lineage>
        <taxon>Bacteria</taxon>
        <taxon>Pseudomonadati</taxon>
        <taxon>Pseudomonadota</taxon>
        <taxon>Gammaproteobacteria</taxon>
        <taxon>Legionellales</taxon>
        <taxon>Coxiellaceae</taxon>
        <taxon>Coxiella</taxon>
    </lineage>
</organism>
<keyword id="KW-0963">Cytoplasm</keyword>
<keyword id="KW-0448">Lipopolysaccharide biosynthesis</keyword>
<keyword id="KW-0548">Nucleotidyltransferase</keyword>
<keyword id="KW-0808">Transferase</keyword>
<comment type="function">
    <text evidence="1">Activates KDO (a required 8-carbon sugar) for incorporation into bacterial lipopolysaccharide in Gram-negative bacteria.</text>
</comment>
<comment type="catalytic activity">
    <reaction evidence="1">
        <text>3-deoxy-alpha-D-manno-oct-2-ulosonate + CTP = CMP-3-deoxy-beta-D-manno-octulosonate + diphosphate</text>
        <dbReference type="Rhea" id="RHEA:23448"/>
        <dbReference type="ChEBI" id="CHEBI:33019"/>
        <dbReference type="ChEBI" id="CHEBI:37563"/>
        <dbReference type="ChEBI" id="CHEBI:85986"/>
        <dbReference type="ChEBI" id="CHEBI:85987"/>
        <dbReference type="EC" id="2.7.7.38"/>
    </reaction>
</comment>
<comment type="pathway">
    <text evidence="1">Nucleotide-sugar biosynthesis; CMP-3-deoxy-D-manno-octulosonate biosynthesis; CMP-3-deoxy-D-manno-octulosonate from 3-deoxy-D-manno-octulosonate and CTP: step 1/1.</text>
</comment>
<comment type="pathway">
    <text evidence="1">Bacterial outer membrane biogenesis; lipopolysaccharide biosynthesis.</text>
</comment>
<comment type="subcellular location">
    <subcellularLocation>
        <location evidence="1">Cytoplasm</location>
    </subcellularLocation>
</comment>
<comment type="similarity">
    <text evidence="1">Belongs to the KdsB family.</text>
</comment>
<accession>A9NBW9</accession>
<feature type="chain" id="PRO_1000091866" description="3-deoxy-manno-octulosonate cytidylyltransferase">
    <location>
        <begin position="1"/>
        <end position="249"/>
    </location>
</feature>
<name>KDSB_COXBR</name>
<reference key="1">
    <citation type="submission" date="2007-11" db="EMBL/GenBank/DDBJ databases">
        <title>Genome sequencing of phylogenetically and phenotypically diverse Coxiella burnetii isolates.</title>
        <authorList>
            <person name="Seshadri R."/>
            <person name="Samuel J.E."/>
        </authorList>
    </citation>
    <scope>NUCLEOTIDE SEQUENCE [LARGE SCALE GENOMIC DNA]</scope>
    <source>
        <strain>RSA 331 / Henzerling II</strain>
    </source>
</reference>
<gene>
    <name evidence="1" type="primary">kdsB</name>
    <name type="ordered locus">COXBURSA331_A0589</name>
</gene>
<proteinExistence type="inferred from homology"/>
<sequence>MEFRVIIPARFDSTRLPGKALVDIAGKPMIQHVYESAIKSGAEEVVIATDDKRIRQVAEDFGAVVCMTSSDHQSGTERIAEAAVALGFEDDEIIVCLQGDEPLIPPDAIRKLAEDLDEHDNVKVASLCTPITEVDELFNPHSTKVVLNRRNYALYFSHAPIPWGRDTFSDKENLQLNGSHYCHVGIYAYRVGFLEEYLSWDACPAEKMEALEQLRILWHGGRIHMVVAKSKCPPGVDTEEDLERVRAYF</sequence>